<dbReference type="EMBL" id="Z49916">
    <property type="protein sequence ID" value="CAA90150.1"/>
    <property type="molecule type" value="mRNA"/>
</dbReference>
<dbReference type="EMBL" id="BC110668">
    <property type="protein sequence ID" value="AAI10669.1"/>
    <property type="molecule type" value="mRNA"/>
</dbReference>
<dbReference type="EMBL" id="CH466983">
    <property type="protein sequence ID" value="EDL01090.1"/>
    <property type="molecule type" value="Genomic_DNA"/>
</dbReference>
<dbReference type="CCDS" id="CCDS20786.1"/>
<dbReference type="PIR" id="I48294">
    <property type="entry name" value="I48294"/>
</dbReference>
<dbReference type="RefSeq" id="NP_001344031.1">
    <property type="nucleotide sequence ID" value="NM_001357102.2"/>
</dbReference>
<dbReference type="RefSeq" id="NP_001344032.1">
    <property type="nucleotide sequence ID" value="NM_001357103.2"/>
</dbReference>
<dbReference type="RefSeq" id="NP_001399188.1">
    <property type="nucleotide sequence ID" value="NM_001412259.1"/>
</dbReference>
<dbReference type="RefSeq" id="NP_001399189.1">
    <property type="nucleotide sequence ID" value="NM_001412260.1"/>
</dbReference>
<dbReference type="RefSeq" id="NP_001399190.1">
    <property type="nucleotide sequence ID" value="NM_001412261.1"/>
</dbReference>
<dbReference type="RefSeq" id="NP_035464.3">
    <property type="nucleotide sequence ID" value="NM_011334.4"/>
</dbReference>
<dbReference type="RefSeq" id="XP_006539564.1">
    <property type="nucleotide sequence ID" value="XM_006539501.3"/>
</dbReference>
<dbReference type="RefSeq" id="XP_006539565.1">
    <property type="nucleotide sequence ID" value="XM_006539502.3"/>
</dbReference>
<dbReference type="RefSeq" id="XP_011248728.1">
    <property type="nucleotide sequence ID" value="XM_011250426.2"/>
</dbReference>
<dbReference type="RefSeq" id="XP_036008510.1">
    <property type="nucleotide sequence ID" value="XM_036152617.1"/>
</dbReference>
<dbReference type="SMR" id="Q61418"/>
<dbReference type="BioGRID" id="198737">
    <property type="interactions" value="2"/>
</dbReference>
<dbReference type="FunCoup" id="Q61418">
    <property type="interactions" value="1523"/>
</dbReference>
<dbReference type="STRING" id="10090.ENSMUSP00000000619"/>
<dbReference type="GlyGen" id="Q61418">
    <property type="glycosylation" value="1 site"/>
</dbReference>
<dbReference type="iPTMnet" id="Q61418"/>
<dbReference type="PhosphoSitePlus" id="Q61418"/>
<dbReference type="PaxDb" id="10090-ENSMUSP00000000619"/>
<dbReference type="ProteomicsDB" id="283376"/>
<dbReference type="Pumba" id="Q61418"/>
<dbReference type="ABCD" id="Q61418">
    <property type="antibodies" value="1 sequenced antibody"/>
</dbReference>
<dbReference type="Antibodypedia" id="23690">
    <property type="antibodies" value="178 antibodies from 30 providers"/>
</dbReference>
<dbReference type="DNASU" id="12727"/>
<dbReference type="Ensembl" id="ENSMUST00000000619.8">
    <property type="protein sequence ID" value="ENSMUSP00000000619.7"/>
    <property type="gene ID" value="ENSMUSG00000000605.10"/>
</dbReference>
<dbReference type="GeneID" id="12727"/>
<dbReference type="KEGG" id="mmu:12727"/>
<dbReference type="UCSC" id="uc009fcq.2">
    <property type="organism name" value="mouse"/>
</dbReference>
<dbReference type="AGR" id="MGI:104571"/>
<dbReference type="CTD" id="1183"/>
<dbReference type="MGI" id="MGI:104571">
    <property type="gene designation" value="Clcn4"/>
</dbReference>
<dbReference type="VEuPathDB" id="HostDB:ENSMUSG00000000605"/>
<dbReference type="eggNOG" id="KOG0475">
    <property type="taxonomic scope" value="Eukaryota"/>
</dbReference>
<dbReference type="GeneTree" id="ENSGT00940000158265"/>
<dbReference type="HOGENOM" id="CLU_003181_2_1_1"/>
<dbReference type="InParanoid" id="Q61418"/>
<dbReference type="OMA" id="TDWVHDT"/>
<dbReference type="OrthoDB" id="36381at9989"/>
<dbReference type="PhylomeDB" id="Q61418"/>
<dbReference type="TreeFam" id="TF313867"/>
<dbReference type="Reactome" id="R-MMU-2672351">
    <property type="pathway name" value="Stimuli-sensing channels"/>
</dbReference>
<dbReference type="BioGRID-ORCS" id="12727">
    <property type="hits" value="6 hits in 45 CRISPR screens"/>
</dbReference>
<dbReference type="ChiTaRS" id="Clcn4">
    <property type="organism name" value="mouse"/>
</dbReference>
<dbReference type="PRO" id="PR:Q61418"/>
<dbReference type="Proteomes" id="UP000000589">
    <property type="component" value="Chromosome 7"/>
</dbReference>
<dbReference type="RNAct" id="Q61418">
    <property type="molecule type" value="protein"/>
</dbReference>
<dbReference type="Bgee" id="ENSMUSG00000000605">
    <property type="expression patterns" value="Expressed in barrel cortex and 261 other cell types or tissues"/>
</dbReference>
<dbReference type="ExpressionAtlas" id="Q61418">
    <property type="expression patterns" value="baseline and differential"/>
</dbReference>
<dbReference type="GO" id="GO:0097546">
    <property type="term" value="C:ciliary base"/>
    <property type="evidence" value="ECO:0000314"/>
    <property type="project" value="MGI"/>
</dbReference>
<dbReference type="GO" id="GO:0031901">
    <property type="term" value="C:early endosome membrane"/>
    <property type="evidence" value="ECO:0007669"/>
    <property type="project" value="UniProtKB-SubCell"/>
</dbReference>
<dbReference type="GO" id="GO:0005789">
    <property type="term" value="C:endoplasmic reticulum membrane"/>
    <property type="evidence" value="ECO:0000250"/>
    <property type="project" value="UniProtKB"/>
</dbReference>
<dbReference type="GO" id="GO:0010008">
    <property type="term" value="C:endosome membrane"/>
    <property type="evidence" value="ECO:0000250"/>
    <property type="project" value="UniProtKB"/>
</dbReference>
<dbReference type="GO" id="GO:0031902">
    <property type="term" value="C:late endosome membrane"/>
    <property type="evidence" value="ECO:0007669"/>
    <property type="project" value="UniProtKB-SubCell"/>
</dbReference>
<dbReference type="GO" id="GO:0005765">
    <property type="term" value="C:lysosomal membrane"/>
    <property type="evidence" value="ECO:0000250"/>
    <property type="project" value="UniProtKB"/>
</dbReference>
<dbReference type="GO" id="GO:0055037">
    <property type="term" value="C:recycling endosome"/>
    <property type="evidence" value="ECO:0000250"/>
    <property type="project" value="UniProtKB"/>
</dbReference>
<dbReference type="GO" id="GO:0055038">
    <property type="term" value="C:recycling endosome membrane"/>
    <property type="evidence" value="ECO:0007669"/>
    <property type="project" value="UniProtKB-SubCell"/>
</dbReference>
<dbReference type="GO" id="GO:0015297">
    <property type="term" value="F:antiporter activity"/>
    <property type="evidence" value="ECO:0000250"/>
    <property type="project" value="UniProtKB"/>
</dbReference>
<dbReference type="GO" id="GO:0005524">
    <property type="term" value="F:ATP binding"/>
    <property type="evidence" value="ECO:0007669"/>
    <property type="project" value="UniProtKB-KW"/>
</dbReference>
<dbReference type="GO" id="GO:0005247">
    <property type="term" value="F:voltage-gated chloride channel activity"/>
    <property type="evidence" value="ECO:0007669"/>
    <property type="project" value="InterPro"/>
</dbReference>
<dbReference type="GO" id="GO:0006821">
    <property type="term" value="P:chloride transport"/>
    <property type="evidence" value="ECO:0000250"/>
    <property type="project" value="UniProtKB"/>
</dbReference>
<dbReference type="GO" id="GO:1905515">
    <property type="term" value="P:non-motile cilium assembly"/>
    <property type="evidence" value="ECO:0000315"/>
    <property type="project" value="MGI"/>
</dbReference>
<dbReference type="CDD" id="cd04591">
    <property type="entry name" value="CBS_pair_voltage-gated_CLC_euk_bac"/>
    <property type="match status" value="1"/>
</dbReference>
<dbReference type="CDD" id="cd03684">
    <property type="entry name" value="ClC_3_like"/>
    <property type="match status" value="1"/>
</dbReference>
<dbReference type="FunFam" id="3.10.580.20:FF:000001">
    <property type="entry name" value="Chloride channel protein"/>
    <property type="match status" value="1"/>
</dbReference>
<dbReference type="FunFam" id="3.90.1280.20:FF:000001">
    <property type="entry name" value="Chloride channel protein"/>
    <property type="match status" value="1"/>
</dbReference>
<dbReference type="FunFam" id="3.90.1280.20:FF:000002">
    <property type="entry name" value="Chloride channel protein"/>
    <property type="match status" value="1"/>
</dbReference>
<dbReference type="Gene3D" id="3.10.580.20">
    <property type="match status" value="1"/>
</dbReference>
<dbReference type="Gene3D" id="3.90.1280.20">
    <property type="match status" value="1"/>
</dbReference>
<dbReference type="Gene3D" id="1.10.3080.10">
    <property type="entry name" value="Clc chloride channel"/>
    <property type="match status" value="1"/>
</dbReference>
<dbReference type="InterPro" id="IPR000644">
    <property type="entry name" value="CBS_dom"/>
</dbReference>
<dbReference type="InterPro" id="IPR046342">
    <property type="entry name" value="CBS_dom_sf"/>
</dbReference>
<dbReference type="InterPro" id="IPR014743">
    <property type="entry name" value="Cl-channel_core"/>
</dbReference>
<dbReference type="InterPro" id="IPR002246">
    <property type="entry name" value="Cl_channel-4"/>
</dbReference>
<dbReference type="InterPro" id="IPR001807">
    <property type="entry name" value="ClC"/>
</dbReference>
<dbReference type="PANTHER" id="PTHR45711">
    <property type="entry name" value="CHLORIDE CHANNEL PROTEIN"/>
    <property type="match status" value="1"/>
</dbReference>
<dbReference type="PANTHER" id="PTHR45711:SF2">
    <property type="entry name" value="H(+)_CL(-) EXCHANGE TRANSPORTER 4"/>
    <property type="match status" value="1"/>
</dbReference>
<dbReference type="Pfam" id="PF00571">
    <property type="entry name" value="CBS"/>
    <property type="match status" value="2"/>
</dbReference>
<dbReference type="Pfam" id="PF00654">
    <property type="entry name" value="Voltage_CLC"/>
    <property type="match status" value="1"/>
</dbReference>
<dbReference type="PRINTS" id="PR00762">
    <property type="entry name" value="CLCHANNEL"/>
</dbReference>
<dbReference type="PRINTS" id="PR01115">
    <property type="entry name" value="CLCHANNEL4"/>
</dbReference>
<dbReference type="SMART" id="SM00116">
    <property type="entry name" value="CBS"/>
    <property type="match status" value="2"/>
</dbReference>
<dbReference type="SUPFAM" id="SSF54631">
    <property type="entry name" value="CBS-domain pair"/>
    <property type="match status" value="1"/>
</dbReference>
<dbReference type="SUPFAM" id="SSF81340">
    <property type="entry name" value="Clc chloride channel"/>
    <property type="match status" value="1"/>
</dbReference>
<dbReference type="PROSITE" id="PS51371">
    <property type="entry name" value="CBS"/>
    <property type="match status" value="2"/>
</dbReference>
<keyword id="KW-0050">Antiport</keyword>
<keyword id="KW-0067">ATP-binding</keyword>
<keyword id="KW-0129">CBS domain</keyword>
<keyword id="KW-0868">Chloride</keyword>
<keyword id="KW-0256">Endoplasmic reticulum</keyword>
<keyword id="KW-0967">Endosome</keyword>
<keyword id="KW-0406">Ion transport</keyword>
<keyword id="KW-0458">Lysosome</keyword>
<keyword id="KW-0472">Membrane</keyword>
<keyword id="KW-0547">Nucleotide-binding</keyword>
<keyword id="KW-1185">Reference proteome</keyword>
<keyword id="KW-0677">Repeat</keyword>
<keyword id="KW-0812">Transmembrane</keyword>
<keyword id="KW-1133">Transmembrane helix</keyword>
<keyword id="KW-0813">Transport</keyword>
<proteinExistence type="evidence at transcript level"/>
<evidence type="ECO:0000250" key="1"/>
<evidence type="ECO:0000250" key="2">
    <source>
        <dbReference type="UniProtKB" id="P35523"/>
    </source>
</evidence>
<evidence type="ECO:0000250" key="3">
    <source>
        <dbReference type="UniProtKB" id="P51793"/>
    </source>
</evidence>
<evidence type="ECO:0000250" key="4">
    <source>
        <dbReference type="UniProtKB" id="P51794"/>
    </source>
</evidence>
<evidence type="ECO:0000255" key="5"/>
<evidence type="ECO:0000255" key="6">
    <source>
        <dbReference type="PROSITE-ProRule" id="PRU00703"/>
    </source>
</evidence>
<evidence type="ECO:0000269" key="7">
    <source>
    </source>
</evidence>
<evidence type="ECO:0000305" key="8"/>
<protein>
    <recommendedName>
        <fullName>H(+)/Cl(-) exchange transporter 4</fullName>
    </recommendedName>
    <alternativeName>
        <fullName>Chloride channel protein 4</fullName>
        <shortName>ClC-4</shortName>
    </alternativeName>
    <alternativeName>
        <fullName>Chloride transporter ClC-4</fullName>
    </alternativeName>
</protein>
<gene>
    <name type="primary">Clcn4</name>
    <name type="synonym">Clc4</name>
    <name type="synonym">Clcn4-2</name>
</gene>
<reference key="1">
    <citation type="journal article" date="1995" name="Nat. Genet.">
        <title>Different chromosomal localization of the Clcn4 gene in Mus spretus and C57BL/6J mice.</title>
        <authorList>
            <person name="Rugarli E.I."/>
            <person name="Adler D.A."/>
            <person name="Borsani G."/>
            <person name="Tsuchiya K."/>
            <person name="Franco B."/>
            <person name="Hauge X."/>
            <person name="Disteche C."/>
            <person name="Chapman V."/>
            <person name="Ballabio A."/>
        </authorList>
    </citation>
    <scope>NUCLEOTIDE SEQUENCE [MRNA]</scope>
    <source>
        <strain>C57BL/6J</strain>
        <tissue>Retina</tissue>
    </source>
</reference>
<reference key="2">
    <citation type="submission" date="2005-07" db="EMBL/GenBank/DDBJ databases">
        <authorList>
            <person name="Mural R.J."/>
            <person name="Adams M.D."/>
            <person name="Myers E.W."/>
            <person name="Smith H.O."/>
            <person name="Venter J.C."/>
        </authorList>
    </citation>
    <scope>NUCLEOTIDE SEQUENCE [LARGE SCALE GENOMIC DNA]</scope>
</reference>
<reference key="3">
    <citation type="journal article" date="2004" name="Genome Res.">
        <title>The status, quality, and expansion of the NIH full-length cDNA project: the Mammalian Gene Collection (MGC).</title>
        <authorList>
            <consortium name="The MGC Project Team"/>
        </authorList>
    </citation>
    <scope>NUCLEOTIDE SEQUENCE [LARGE SCALE MRNA]</scope>
    <source>
        <tissue>Olfactory epithelium</tissue>
    </source>
</reference>
<reference key="4">
    <citation type="journal article" date="2006" name="FASEB J.">
        <title>The human ClC-4 protein, a member of the CLC chloride channel/transporter family, is localized to the endoplasmic reticulum by its N-terminus.</title>
        <authorList>
            <person name="Okkenhaug H."/>
            <person name="Weylandt K.H."/>
            <person name="Carmena D."/>
            <person name="Wells D.J."/>
            <person name="Higgins C.F."/>
            <person name="Sardini A."/>
        </authorList>
    </citation>
    <scope>TISSUE SPECIFICITY</scope>
</reference>
<name>CLCN4_MOUSE</name>
<sequence length="747" mass="83733">MDFLEEPFPDVGTYEDFHTIDWLREKSRDTDRHRKITSKSKESIWEFIKSLLDAWSGWVVMLLIGLLAGTLAGVIDLAVDWMTDLKEGVCLSAFWYSHEQCCWTSNETTFEDRDKCPLWQKWSELLLSQSEGASAYILNYLMYILWALLFAFLAVSLVRVFAPYACGSGIPEIKTILSGFIIRGYLGKWTLLIKTVTLVLVVSSGLSLGKEGPLVHVACCCGNFFSSLFSKYSKNEGKRREVLSAAAAAGVSVAFGAPIGGVLFSLEEVSYYFPLKTLWRSFFAALVAAFTLRSINPFGNSRLVLFYVEYHTPWYMAELFPFILLGVFGGLWGTLFTRCNIAWCRRRKTTRLGRYPVLEVIAVTAVTAIVAYPNPYTRQSTSELISELFNDCGALESSQLCDYINDPNMTRPVDDIPDRPAGVGVYTAMWQLALALIFKIVITIFTFGMKIPSGLFIPSMAVGAMAGRMVGIGVEQLAYHHHDWIIFRNWCRPGADCVTPGLYAMVGAAACLGGVTRMTVSLVVIMFELTGGLEYIVPLMAAAVTSKWVADAFGKEGIYEAHIHLNGYPFLDVKDEFTHRTLATDVMRPRRGEPPLSVLTQDSMTVEDVETLIKETDYNGFPVLVSRDSERLIGFAQRRELILAIKNARQRQEGIVSNSIMYFTEEPPELPANSPHPLKLRRILNLSPFTVTDHTPMETVVDIFRKLGLRQCLVTRSGRLLGIITKKDVLRHMAQMANQDPESIMFN</sequence>
<accession>Q61418</accession>
<accession>Q2TAX6</accession>
<feature type="chain" id="PRO_0000094444" description="H(+)/Cl(-) exchange transporter 4">
    <location>
        <begin position="1"/>
        <end position="747"/>
    </location>
</feature>
<feature type="topological domain" description="Cytoplasmic" evidence="2">
    <location>
        <begin position="1"/>
        <end position="54"/>
    </location>
</feature>
<feature type="transmembrane region" description="Helical" evidence="2">
    <location>
        <begin position="55"/>
        <end position="92"/>
    </location>
</feature>
<feature type="transmembrane region" description="Helical" evidence="2">
    <location>
        <begin position="138"/>
        <end position="161"/>
    </location>
</feature>
<feature type="intramembrane region" description="Helical" evidence="2">
    <location>
        <begin position="170"/>
        <end position="177"/>
    </location>
</feature>
<feature type="transmembrane region" description="Helical" evidence="2">
    <location>
        <begin position="187"/>
        <end position="205"/>
    </location>
</feature>
<feature type="transmembrane region" description="Helical" evidence="2">
    <location>
        <begin position="211"/>
        <end position="230"/>
    </location>
</feature>
<feature type="intramembrane region" description="Helical" evidence="2">
    <location>
        <begin position="242"/>
        <end position="254"/>
    </location>
</feature>
<feature type="intramembrane region" description="Helical" evidence="2">
    <location>
        <begin position="258"/>
        <end position="266"/>
    </location>
</feature>
<feature type="transmembrane region" description="Helical" evidence="2">
    <location>
        <begin position="278"/>
        <end position="296"/>
    </location>
</feature>
<feature type="transmembrane region" description="Helical" evidence="2">
    <location>
        <begin position="320"/>
        <end position="345"/>
    </location>
</feature>
<feature type="transmembrane region" description="Helical" evidence="2">
    <location>
        <begin position="352"/>
        <end position="372"/>
    </location>
</feature>
<feature type="transmembrane region" description="Helical" evidence="2">
    <location>
        <begin position="429"/>
        <end position="449"/>
    </location>
</feature>
<feature type="transmembrane region" description="Helical" evidence="2">
    <location>
        <begin position="454"/>
        <end position="473"/>
    </location>
</feature>
<feature type="intramembrane region" description="Helical" evidence="2">
    <location>
        <begin position="501"/>
        <end position="515"/>
    </location>
</feature>
<feature type="intramembrane region" description="Helical" evidence="2">
    <location>
        <begin position="519"/>
        <end position="530"/>
    </location>
</feature>
<feature type="intramembrane region" description="Note=Loop between two helices" evidence="2">
    <location>
        <begin position="531"/>
        <end position="534"/>
    </location>
</feature>
<feature type="transmembrane region" description="Helical" evidence="2">
    <location>
        <begin position="535"/>
        <end position="553"/>
    </location>
</feature>
<feature type="topological domain" description="Cytoplasmic" evidence="2">
    <location>
        <begin position="554"/>
        <end position="747"/>
    </location>
</feature>
<feature type="domain" description="CBS 1" evidence="6">
    <location>
        <begin position="587"/>
        <end position="653"/>
    </location>
</feature>
<feature type="domain" description="CBS 2" evidence="6">
    <location>
        <begin position="680"/>
        <end position="742"/>
    </location>
</feature>
<feature type="region of interest" description="Required for localization in the endoplasmic reticulum" evidence="3">
    <location>
        <begin position="1"/>
        <end position="50"/>
    </location>
</feature>
<feature type="region of interest" description="Required for localization in the endoplasmic reticulum" evidence="3">
    <location>
        <begin position="654"/>
        <end position="683"/>
    </location>
</feature>
<feature type="short sequence motif" description="Selectivity filter part_1" evidence="1">
    <location>
        <begin position="167"/>
        <end position="171"/>
    </location>
</feature>
<feature type="short sequence motif" description="Selectivity filter part_2" evidence="1">
    <location>
        <begin position="209"/>
        <end position="213"/>
    </location>
</feature>
<feature type="short sequence motif" description="Selectivity filter part_3" evidence="1">
    <location>
        <begin position="454"/>
        <end position="458"/>
    </location>
</feature>
<feature type="binding site" evidence="1">
    <location>
        <position position="168"/>
    </location>
    <ligand>
        <name>chloride</name>
        <dbReference type="ChEBI" id="CHEBI:17996"/>
    </ligand>
</feature>
<feature type="binding site" evidence="1">
    <location>
        <position position="456"/>
    </location>
    <ligand>
        <name>chloride</name>
        <dbReference type="ChEBI" id="CHEBI:17996"/>
    </ligand>
</feature>
<feature type="binding site" evidence="1">
    <location>
        <position position="559"/>
    </location>
    <ligand>
        <name>chloride</name>
        <dbReference type="ChEBI" id="CHEBI:17996"/>
    </ligand>
</feature>
<feature type="binding site" evidence="1">
    <location>
        <position position="597"/>
    </location>
    <ligand>
        <name>ATP</name>
        <dbReference type="ChEBI" id="CHEBI:30616"/>
    </ligand>
</feature>
<feature type="binding site" evidence="1">
    <location>
        <begin position="618"/>
        <end position="620"/>
    </location>
    <ligand>
        <name>ATP</name>
        <dbReference type="ChEBI" id="CHEBI:30616"/>
    </ligand>
</feature>
<feature type="binding site" evidence="1">
    <location>
        <begin position="725"/>
        <end position="728"/>
    </location>
    <ligand>
        <name>ATP</name>
        <dbReference type="ChEBI" id="CHEBI:30616"/>
    </ligand>
</feature>
<feature type="site" description="Mediates proton transfer from the outer aqueous phase to the interior of the protein; involved in linking H(+) and Cl(-) transport" evidence="1">
    <location>
        <position position="211"/>
    </location>
</feature>
<feature type="site" description="Mediates proton transfer from the protein to the inner aqueous phase" evidence="1">
    <location>
        <position position="268"/>
    </location>
</feature>
<feature type="sequence conflict" description="In Ref. 1; CAA90150." evidence="8" ref="1">
    <original>A</original>
    <variation>R</variation>
    <location>
        <position position="284"/>
    </location>
</feature>
<feature type="sequence conflict" description="In Ref. 1; CAA90150." evidence="8" ref="1">
    <original>I</original>
    <variation>Y</variation>
    <location>
        <position position="437"/>
    </location>
</feature>
<feature type="sequence conflict" description="In Ref. 1; CAA90150." evidence="8" ref="1">
    <original>G</original>
    <variation>E</variation>
    <location>
        <position position="592"/>
    </location>
</feature>
<feature type="sequence conflict" description="In Ref. 1; CAA90150." evidence="8" ref="1">
    <original>L</original>
    <variation>F</variation>
    <location>
        <position position="684"/>
    </location>
</feature>
<organism>
    <name type="scientific">Mus musculus</name>
    <name type="common">Mouse</name>
    <dbReference type="NCBI Taxonomy" id="10090"/>
    <lineage>
        <taxon>Eukaryota</taxon>
        <taxon>Metazoa</taxon>
        <taxon>Chordata</taxon>
        <taxon>Craniata</taxon>
        <taxon>Vertebrata</taxon>
        <taxon>Euteleostomi</taxon>
        <taxon>Mammalia</taxon>
        <taxon>Eutheria</taxon>
        <taxon>Euarchontoglires</taxon>
        <taxon>Glires</taxon>
        <taxon>Rodentia</taxon>
        <taxon>Myomorpha</taxon>
        <taxon>Muroidea</taxon>
        <taxon>Muridae</taxon>
        <taxon>Murinae</taxon>
        <taxon>Mus</taxon>
        <taxon>Mus</taxon>
    </lineage>
</organism>
<comment type="function">
    <text evidence="3">Strongly outwardly rectifying, electrogenic H(+)/Cl(-)exchanger which mediates the exchange of chloride ions against protons (By similarity). The CLC channel family contains both chloride channels and proton-coupled anion transporters that exchange chloride or another anion for protons (By similarity). The presence of conserved gating glutamate residues is typical for family members that function as antiporters (By similarity).</text>
</comment>
<comment type="subcellular location">
    <subcellularLocation>
        <location evidence="4">Early endosome membrane</location>
        <topology evidence="5">Multi-pass membrane protein</topology>
    </subcellularLocation>
    <subcellularLocation>
        <location evidence="4">Late endosome membrane</location>
        <topology evidence="5">Multi-pass membrane protein</topology>
    </subcellularLocation>
    <subcellularLocation>
        <location evidence="3">Endoplasmic reticulum membrane</location>
        <topology evidence="5">Multi-pass membrane protein</topology>
    </subcellularLocation>
    <subcellularLocation>
        <location evidence="3">Lysosome membrane</location>
        <topology evidence="5">Multi-pass membrane protein</topology>
    </subcellularLocation>
    <subcellularLocation>
        <location evidence="3">Recycling endosome membrane</location>
        <topology evidence="5">Multi-pass membrane protein</topology>
    </subcellularLocation>
    <text evidence="3">Localizes to late endosome membrane, lysosome membrane and recycling endosome membrane in the presence of CLCN3.</text>
</comment>
<comment type="tissue specificity">
    <text evidence="7">Predominantly present in excitable tissues such as nervous system and skeletal muscle. Not detected in heart.</text>
</comment>
<comment type="similarity">
    <text evidence="8">Belongs to the chloride channel (TC 2.A.49) family. ClC-4/CLCN4 subfamily.</text>
</comment>